<feature type="chain" id="PRO_0000406305" description="Probable endoribonuclease MazF2">
    <location>
        <begin position="1"/>
        <end position="102"/>
    </location>
</feature>
<evidence type="ECO:0000250" key="1">
    <source>
        <dbReference type="UniProtKB" id="P9WIH9"/>
    </source>
</evidence>
<evidence type="ECO:0000269" key="2">
    <source>
    </source>
</evidence>
<evidence type="ECO:0000303" key="3">
    <source>
    </source>
</evidence>
<evidence type="ECO:0000305" key="4"/>
<comment type="function">
    <text evidence="1 2 4">Toxic component of a type II toxin-antitoxin (TA) system. Upon expression in E.coli partially inhibits cell growth after one cell generation (PubMed:16611633). Its cognate antitoxin is MazE2. Probably an endoribonuclease (By similarity).</text>
</comment>
<comment type="subunit">
    <text evidence="1">Forms a complex with cognate antitoxin MazE2.</text>
</comment>
<comment type="similarity">
    <text evidence="4">Belongs to the PemK/MazF family.</text>
</comment>
<reference key="1">
    <citation type="journal article" date="1998" name="Nature">
        <title>Deciphering the biology of Mycobacterium tuberculosis from the complete genome sequence.</title>
        <authorList>
            <person name="Cole S.T."/>
            <person name="Brosch R."/>
            <person name="Parkhill J."/>
            <person name="Garnier T."/>
            <person name="Churcher C.M."/>
            <person name="Harris D.E."/>
            <person name="Gordon S.V."/>
            <person name="Eiglmeier K."/>
            <person name="Gas S."/>
            <person name="Barry C.E. III"/>
            <person name="Tekaia F."/>
            <person name="Badcock K."/>
            <person name="Basham D."/>
            <person name="Brown D."/>
            <person name="Chillingworth T."/>
            <person name="Connor R."/>
            <person name="Davies R.M."/>
            <person name="Devlin K."/>
            <person name="Feltwell T."/>
            <person name="Gentles S."/>
            <person name="Hamlin N."/>
            <person name="Holroyd S."/>
            <person name="Hornsby T."/>
            <person name="Jagels K."/>
            <person name="Krogh A."/>
            <person name="McLean J."/>
            <person name="Moule S."/>
            <person name="Murphy L.D."/>
            <person name="Oliver S."/>
            <person name="Osborne J."/>
            <person name="Quail M.A."/>
            <person name="Rajandream M.A."/>
            <person name="Rogers J."/>
            <person name="Rutter S."/>
            <person name="Seeger K."/>
            <person name="Skelton S."/>
            <person name="Squares S."/>
            <person name="Squares R."/>
            <person name="Sulston J.E."/>
            <person name="Taylor K."/>
            <person name="Whitehead S."/>
            <person name="Barrell B.G."/>
        </authorList>
    </citation>
    <scope>NUCLEOTIDE SEQUENCE [LARGE SCALE GENOMIC DNA]</scope>
    <source>
        <strain>ATCC 25618 / H37Rv</strain>
    </source>
</reference>
<reference key="2">
    <citation type="journal article" date="2006" name="J. Biol. Chem.">
        <title>Characterization of mRNA interferases from Mycobacterium tuberculosis.</title>
        <authorList>
            <person name="Zhu L."/>
            <person name="Zhang Y."/>
            <person name="Teh J.S."/>
            <person name="Zhang J."/>
            <person name="Connell N."/>
            <person name="Rubin H."/>
            <person name="Inouye M."/>
        </authorList>
    </citation>
    <scope>EXPRESSION IN E.COLI</scope>
    <source>
        <strain>ATCC 25618 / H37Rv</strain>
    </source>
</reference>
<reference key="3">
    <citation type="journal article" date="2011" name="Mol. Cell. Proteomics">
        <title>Proteogenomic analysis of Mycobacterium tuberculosis by high resolution mass spectrometry.</title>
        <authorList>
            <person name="Kelkar D.S."/>
            <person name="Kumar D."/>
            <person name="Kumar P."/>
            <person name="Balakrishnan L."/>
            <person name="Muthusamy B."/>
            <person name="Yadav A.K."/>
            <person name="Shrivastava P."/>
            <person name="Marimuthu A."/>
            <person name="Anand S."/>
            <person name="Sundaram H."/>
            <person name="Kingsbury R."/>
            <person name="Harsha H.C."/>
            <person name="Nair B."/>
            <person name="Prasad T.S."/>
            <person name="Chauhan D.S."/>
            <person name="Katoch K."/>
            <person name="Katoch V.M."/>
            <person name="Kumar P."/>
            <person name="Chaerkady R."/>
            <person name="Ramachandran S."/>
            <person name="Dash D."/>
            <person name="Pandey A."/>
        </authorList>
    </citation>
    <scope>IDENTIFICATION BY MASS SPECTROMETRY [LARGE SCALE ANALYSIS]</scope>
    <source>
        <strain>ATCC 25618 / H37Rv</strain>
    </source>
</reference>
<gene>
    <name type="primary">mazF2</name>
    <name evidence="3" type="synonym">mazF-mt4</name>
    <name type="ordered locus">Rv0659c</name>
</gene>
<protein>
    <recommendedName>
        <fullName evidence="4">Probable endoribonuclease MazF2</fullName>
        <ecNumber>3.1.-.-</ecNumber>
    </recommendedName>
    <alternativeName>
        <fullName evidence="3">Probable toxin MazF-mt4</fullName>
    </alternativeName>
</protein>
<keyword id="KW-0255">Endonuclease</keyword>
<keyword id="KW-0378">Hydrolase</keyword>
<keyword id="KW-0540">Nuclease</keyword>
<keyword id="KW-1185">Reference proteome</keyword>
<keyword id="KW-1277">Toxin-antitoxin system</keyword>
<dbReference type="EC" id="3.1.-.-"/>
<dbReference type="EMBL" id="AL123456">
    <property type="protein sequence ID" value="CCP43402.1"/>
    <property type="molecule type" value="Genomic_DNA"/>
</dbReference>
<dbReference type="PIR" id="F70534">
    <property type="entry name" value="F70534"/>
</dbReference>
<dbReference type="RefSeq" id="NP_215173.1">
    <property type="nucleotide sequence ID" value="NC_000962.3"/>
</dbReference>
<dbReference type="RefSeq" id="WP_003403376.1">
    <property type="nucleotide sequence ID" value="NZ_NVQJ01000007.1"/>
</dbReference>
<dbReference type="SMR" id="P9WII1"/>
<dbReference type="STRING" id="83332.Rv0659c"/>
<dbReference type="PaxDb" id="83332-Rv0659c"/>
<dbReference type="DNASU" id="888134"/>
<dbReference type="GeneID" id="888134"/>
<dbReference type="KEGG" id="mtu:Rv0659c"/>
<dbReference type="KEGG" id="mtv:RVBD_0659c"/>
<dbReference type="TubercuList" id="Rv0659c"/>
<dbReference type="eggNOG" id="COG2337">
    <property type="taxonomic scope" value="Bacteria"/>
</dbReference>
<dbReference type="InParanoid" id="P9WII1"/>
<dbReference type="OrthoDB" id="3196747at2"/>
<dbReference type="PhylomeDB" id="P9WII1"/>
<dbReference type="Proteomes" id="UP000001584">
    <property type="component" value="Chromosome"/>
</dbReference>
<dbReference type="GO" id="GO:0003677">
    <property type="term" value="F:DNA binding"/>
    <property type="evidence" value="ECO:0007669"/>
    <property type="project" value="InterPro"/>
</dbReference>
<dbReference type="GO" id="GO:0004521">
    <property type="term" value="F:RNA endonuclease activity"/>
    <property type="evidence" value="ECO:0000318"/>
    <property type="project" value="GO_Central"/>
</dbReference>
<dbReference type="GO" id="GO:0006402">
    <property type="term" value="P:mRNA catabolic process"/>
    <property type="evidence" value="ECO:0000318"/>
    <property type="project" value="GO_Central"/>
</dbReference>
<dbReference type="GO" id="GO:0016075">
    <property type="term" value="P:rRNA catabolic process"/>
    <property type="evidence" value="ECO:0000318"/>
    <property type="project" value="GO_Central"/>
</dbReference>
<dbReference type="Gene3D" id="2.30.30.110">
    <property type="match status" value="1"/>
</dbReference>
<dbReference type="InterPro" id="IPR003477">
    <property type="entry name" value="PemK-like"/>
</dbReference>
<dbReference type="InterPro" id="IPR011067">
    <property type="entry name" value="Plasmid_toxin/cell-grow_inhib"/>
</dbReference>
<dbReference type="PANTHER" id="PTHR33988:SF2">
    <property type="entry name" value="ENDORIBONUCLEASE MAZF"/>
    <property type="match status" value="1"/>
</dbReference>
<dbReference type="PANTHER" id="PTHR33988">
    <property type="entry name" value="ENDORIBONUCLEASE MAZF-RELATED"/>
    <property type="match status" value="1"/>
</dbReference>
<dbReference type="Pfam" id="PF02452">
    <property type="entry name" value="PemK_toxin"/>
    <property type="match status" value="1"/>
</dbReference>
<dbReference type="SUPFAM" id="SSF50118">
    <property type="entry name" value="Cell growth inhibitor/plasmid maintenance toxic component"/>
    <property type="match status" value="1"/>
</dbReference>
<sequence length="102" mass="11320">MRRGELWFAATPGGDRPVLVLTRDPVADRIGAVVVVALTRTRRGLVSELELTAVENRVPSDCVVNFDNIHTLPRTAFRRRITRLSPARLHEACQTLRASTGC</sequence>
<accession>P9WII1</accession>
<accession>L0T7C6</accession>
<accession>O06780</accession>
<accession>Q7D9G9</accession>
<organism>
    <name type="scientific">Mycobacterium tuberculosis (strain ATCC 25618 / H37Rv)</name>
    <dbReference type="NCBI Taxonomy" id="83332"/>
    <lineage>
        <taxon>Bacteria</taxon>
        <taxon>Bacillati</taxon>
        <taxon>Actinomycetota</taxon>
        <taxon>Actinomycetes</taxon>
        <taxon>Mycobacteriales</taxon>
        <taxon>Mycobacteriaceae</taxon>
        <taxon>Mycobacterium</taxon>
        <taxon>Mycobacterium tuberculosis complex</taxon>
    </lineage>
</organism>
<name>MAZF2_MYCTU</name>
<proteinExistence type="evidence at protein level"/>